<organism>
    <name type="scientific">Gloydius brevicauda</name>
    <name type="common">Korean slamosa snake</name>
    <name type="synonym">Agkistrodon halys brevicaudus</name>
    <dbReference type="NCBI Taxonomy" id="3148161"/>
    <lineage>
        <taxon>Eukaryota</taxon>
        <taxon>Metazoa</taxon>
        <taxon>Chordata</taxon>
        <taxon>Craniata</taxon>
        <taxon>Vertebrata</taxon>
        <taxon>Euteleostomi</taxon>
        <taxon>Lepidosauria</taxon>
        <taxon>Squamata</taxon>
        <taxon>Bifurcata</taxon>
        <taxon>Unidentata</taxon>
        <taxon>Episquamata</taxon>
        <taxon>Toxicofera</taxon>
        <taxon>Serpentes</taxon>
        <taxon>Colubroidea</taxon>
        <taxon>Viperidae</taxon>
        <taxon>Crotalinae</taxon>
        <taxon>Gloydius</taxon>
    </lineage>
</organism>
<feature type="signal peptide" evidence="2">
    <location>
        <begin position="1"/>
        <end position="18"/>
    </location>
</feature>
<feature type="propeptide" id="PRO_0000296193" evidence="1">
    <location>
        <begin position="19"/>
        <end position="24"/>
    </location>
</feature>
<feature type="chain" id="PRO_5000053381" description="Snake venom serine protease Haly-2">
    <location>
        <begin position="25"/>
        <end position="257"/>
    </location>
</feature>
<feature type="domain" description="Peptidase S1" evidence="3">
    <location>
        <begin position="25"/>
        <end position="248"/>
    </location>
</feature>
<feature type="active site" description="Charge relay system" evidence="1">
    <location>
        <position position="64"/>
    </location>
</feature>
<feature type="active site" description="Charge relay system" evidence="1">
    <location>
        <position position="109"/>
    </location>
</feature>
<feature type="active site" description="Charge relay system" evidence="1">
    <location>
        <position position="203"/>
    </location>
</feature>
<feature type="glycosylation site" description="N-linked (GlcNAc...) asparagine" evidence="2">
    <location>
        <position position="100"/>
    </location>
</feature>
<feature type="disulfide bond" evidence="3">
    <location>
        <begin position="31"/>
        <end position="162"/>
    </location>
</feature>
<feature type="disulfide bond" evidence="3">
    <location>
        <begin position="49"/>
        <end position="65"/>
    </location>
</feature>
<feature type="disulfide bond" evidence="3">
    <location>
        <begin position="97"/>
        <end position="255"/>
    </location>
</feature>
<feature type="disulfide bond" evidence="3">
    <location>
        <begin position="141"/>
        <end position="209"/>
    </location>
</feature>
<feature type="disulfide bond" evidence="3">
    <location>
        <begin position="173"/>
        <end position="188"/>
    </location>
</feature>
<feature type="disulfide bond" evidence="3">
    <location>
        <begin position="199"/>
        <end position="224"/>
    </location>
</feature>
<evidence type="ECO:0000250" key="1"/>
<evidence type="ECO:0000255" key="2"/>
<evidence type="ECO:0000255" key="3">
    <source>
        <dbReference type="PROSITE-ProRule" id="PRU00274"/>
    </source>
</evidence>
<dbReference type="EC" id="3.4.21.-"/>
<dbReference type="EMBL" id="AF017736">
    <property type="protein sequence ID" value="AAD01623.1"/>
    <property type="molecule type" value="mRNA"/>
</dbReference>
<dbReference type="SMR" id="Q9YGJ9"/>
<dbReference type="MEROPS" id="S01.497"/>
<dbReference type="GO" id="GO:0005576">
    <property type="term" value="C:extracellular region"/>
    <property type="evidence" value="ECO:0007669"/>
    <property type="project" value="UniProtKB-SubCell"/>
</dbReference>
<dbReference type="GO" id="GO:0030141">
    <property type="term" value="C:secretory granule"/>
    <property type="evidence" value="ECO:0007669"/>
    <property type="project" value="TreeGrafter"/>
</dbReference>
<dbReference type="GO" id="GO:0004252">
    <property type="term" value="F:serine-type endopeptidase activity"/>
    <property type="evidence" value="ECO:0007669"/>
    <property type="project" value="InterPro"/>
</dbReference>
<dbReference type="GO" id="GO:0090729">
    <property type="term" value="F:toxin activity"/>
    <property type="evidence" value="ECO:0007669"/>
    <property type="project" value="UniProtKB-KW"/>
</dbReference>
<dbReference type="GO" id="GO:0006508">
    <property type="term" value="P:proteolysis"/>
    <property type="evidence" value="ECO:0007669"/>
    <property type="project" value="UniProtKB-KW"/>
</dbReference>
<dbReference type="CDD" id="cd00190">
    <property type="entry name" value="Tryp_SPc"/>
    <property type="match status" value="1"/>
</dbReference>
<dbReference type="FunFam" id="2.40.10.10:FF:000158">
    <property type="entry name" value="Thrombin-like enzyme saxthrombin"/>
    <property type="match status" value="1"/>
</dbReference>
<dbReference type="FunFam" id="2.40.10.10:FF:000153">
    <property type="entry name" value="Venom plasminogen activator TSV-PA"/>
    <property type="match status" value="1"/>
</dbReference>
<dbReference type="Gene3D" id="2.40.10.10">
    <property type="entry name" value="Trypsin-like serine proteases"/>
    <property type="match status" value="2"/>
</dbReference>
<dbReference type="InterPro" id="IPR009003">
    <property type="entry name" value="Peptidase_S1_PA"/>
</dbReference>
<dbReference type="InterPro" id="IPR043504">
    <property type="entry name" value="Peptidase_S1_PA_chymotrypsin"/>
</dbReference>
<dbReference type="InterPro" id="IPR001314">
    <property type="entry name" value="Peptidase_S1A"/>
</dbReference>
<dbReference type="InterPro" id="IPR001254">
    <property type="entry name" value="Trypsin_dom"/>
</dbReference>
<dbReference type="InterPro" id="IPR018114">
    <property type="entry name" value="TRYPSIN_HIS"/>
</dbReference>
<dbReference type="InterPro" id="IPR033116">
    <property type="entry name" value="TRYPSIN_SER"/>
</dbReference>
<dbReference type="PANTHER" id="PTHR24271:SF47">
    <property type="entry name" value="KALLIKREIN-1"/>
    <property type="match status" value="1"/>
</dbReference>
<dbReference type="PANTHER" id="PTHR24271">
    <property type="entry name" value="KALLIKREIN-RELATED"/>
    <property type="match status" value="1"/>
</dbReference>
<dbReference type="Pfam" id="PF00089">
    <property type="entry name" value="Trypsin"/>
    <property type="match status" value="1"/>
</dbReference>
<dbReference type="PRINTS" id="PR00722">
    <property type="entry name" value="CHYMOTRYPSIN"/>
</dbReference>
<dbReference type="SMART" id="SM00020">
    <property type="entry name" value="Tryp_SPc"/>
    <property type="match status" value="1"/>
</dbReference>
<dbReference type="SUPFAM" id="SSF50494">
    <property type="entry name" value="Trypsin-like serine proteases"/>
    <property type="match status" value="1"/>
</dbReference>
<dbReference type="PROSITE" id="PS50240">
    <property type="entry name" value="TRYPSIN_DOM"/>
    <property type="match status" value="1"/>
</dbReference>
<dbReference type="PROSITE" id="PS00134">
    <property type="entry name" value="TRYPSIN_HIS"/>
    <property type="match status" value="1"/>
</dbReference>
<dbReference type="PROSITE" id="PS00135">
    <property type="entry name" value="TRYPSIN_SER"/>
    <property type="match status" value="1"/>
</dbReference>
<accession>Q9YGJ9</accession>
<comment type="function">
    <text evidence="1">Snake venom serine protease that may act in the hemostasis system of the prey.</text>
</comment>
<comment type="subunit">
    <text evidence="1">Monomer.</text>
</comment>
<comment type="subcellular location">
    <subcellularLocation>
        <location evidence="1">Secreted</location>
    </subcellularLocation>
</comment>
<comment type="tissue specificity">
    <text>Expressed by the venom gland.</text>
</comment>
<comment type="similarity">
    <text evidence="3">Belongs to the peptidase S1 family. Snake venom subfamily.</text>
</comment>
<keyword id="KW-1015">Disulfide bond</keyword>
<keyword id="KW-0325">Glycoprotein</keyword>
<keyword id="KW-1199">Hemostasis impairing toxin</keyword>
<keyword id="KW-0378">Hydrolase</keyword>
<keyword id="KW-0617">Plasminogen activation</keyword>
<keyword id="KW-0645">Protease</keyword>
<keyword id="KW-0964">Secreted</keyword>
<keyword id="KW-0720">Serine protease</keyword>
<keyword id="KW-0732">Signal</keyword>
<keyword id="KW-0800">Toxin</keyword>
<keyword id="KW-0865">Zymogen</keyword>
<name>VSPH2_GLOBR</name>
<sequence>MVLIRVLANLLILQLSYAQKSSELIIGGDECNINEHRSLVLMYYDGHQCDGTLINEEWVLTAAHCDGENMEIQLGVHSKKVPNEDVQTRVPKEKFFCDSNKTYARWNKDIMLIRLDRPVSNSAHIAPLSLPSSPPSVGSVCRIMGWGTFSTTQETYPDVPHCANINIHDFEVCQAAYPGLPATNRILCAGILEGGKDTCKGDSGGPLICNGEIQGIVSWGGHLCGNVLEPGIYTKVFDHLEWIRSIIAGNTDATCPL</sequence>
<reference key="1">
    <citation type="journal article" date="1998" name="Toxicon">
        <title>Expression and characterization of a novel plasminogen activator from Agkistrodon halys venom.</title>
        <authorList>
            <person name="Park D.S."/>
            <person name="Kim H.D."/>
            <person name="Chung K.H."/>
            <person name="Kim D.-S."/>
            <person name="Yun Y.D."/>
        </authorList>
    </citation>
    <scope>NUCLEOTIDE SEQUENCE [MRNA]</scope>
    <source>
        <tissue>Venom gland</tissue>
    </source>
</reference>
<protein>
    <recommendedName>
        <fullName>Snake venom serine protease Haly-2</fullName>
        <shortName>SVSP</shortName>
        <ecNumber>3.4.21.-</ecNumber>
    </recommendedName>
</protein>
<proteinExistence type="evidence at transcript level"/>